<reference key="1">
    <citation type="journal article" date="2003" name="J. Helminthol.">
        <title>Molecular cloning and expression of the full-length tropomyosin gene from Trichinella spiralis.</title>
        <authorList>
            <person name="Nakada T."/>
            <person name="Nagano I."/>
            <person name="Wu Z."/>
            <person name="Takahashi Y."/>
        </authorList>
    </citation>
    <scope>NUCLEOTIDE SEQUENCE [MRNA]</scope>
</reference>
<comment type="function">
    <text>Tropomyosin, in association with the troponin complex, plays a central role in the calcium dependent regulation of muscle contraction.</text>
</comment>
<comment type="domain">
    <text>The molecule is in a coiled coil structure that is formed by 2 polypeptide chains. The sequence exhibits a prominent seven-residues periodicity.</text>
</comment>
<comment type="similarity">
    <text evidence="2">Belongs to the tropomyosin family.</text>
</comment>
<proteinExistence type="evidence at transcript level"/>
<sequence>MDAIKKKMQAMKIEKDNAMDRADAAEEKARQQQERVEKLEEELRDTQKKMMQVENELDKAQEELTGANAQLEEKEKKVQEAEAEVAALNRRIQLLEEDFERAEERLIIATEKLGEASQTADESERVRKVMENRSLQDEERVYQLEAQLKEAQLLAEEADRKYDEVARKLAMVEADLERAEERAEAGENKIVELEEELRVVGNNLKSLEVSEEKALQREDSYEEQIRLLTQRLKEAETRAEFAERSVQKLQKEVDRLEDELVHEKEKYKAISEELDQTFQELSGY</sequence>
<protein>
    <recommendedName>
        <fullName>Tropomyosin</fullName>
    </recommendedName>
</protein>
<name>TPM_TRISP</name>
<accession>Q95VA8</accession>
<evidence type="ECO:0000256" key="1">
    <source>
        <dbReference type="SAM" id="MobiDB-lite"/>
    </source>
</evidence>
<evidence type="ECO:0000305" key="2"/>
<organism>
    <name type="scientific">Trichinella spiralis</name>
    <name type="common">Trichina worm</name>
    <dbReference type="NCBI Taxonomy" id="6334"/>
    <lineage>
        <taxon>Eukaryota</taxon>
        <taxon>Metazoa</taxon>
        <taxon>Ecdysozoa</taxon>
        <taxon>Nematoda</taxon>
        <taxon>Enoplea</taxon>
        <taxon>Dorylaimia</taxon>
        <taxon>Trichinellida</taxon>
        <taxon>Trichinellidae</taxon>
        <taxon>Trichinella</taxon>
    </lineage>
</organism>
<keyword id="KW-0175">Coiled coil</keyword>
<keyword id="KW-0677">Repeat</keyword>
<feature type="chain" id="PRO_0000205650" description="Tropomyosin">
    <location>
        <begin position="1"/>
        <end position="284"/>
    </location>
</feature>
<feature type="region of interest" description="Disordered" evidence="1">
    <location>
        <begin position="1"/>
        <end position="47"/>
    </location>
</feature>
<feature type="coiled-coil region">
    <location>
        <begin position="1"/>
        <end position="284"/>
    </location>
</feature>
<feature type="compositionally biased region" description="Basic and acidic residues" evidence="1">
    <location>
        <begin position="12"/>
        <end position="38"/>
    </location>
</feature>
<dbReference type="EMBL" id="AF419300">
    <property type="protein sequence ID" value="AAL14704.1"/>
    <property type="molecule type" value="mRNA"/>
</dbReference>
<dbReference type="SMR" id="Q95VA8"/>
<dbReference type="eggNOG" id="KOG1003">
    <property type="taxonomic scope" value="Eukaryota"/>
</dbReference>
<dbReference type="HOGENOM" id="CLU_055027_0_2_1"/>
<dbReference type="FunFam" id="1.20.5.170:FF:000005">
    <property type="entry name" value="Tropomyosin alpha-1 chain"/>
    <property type="match status" value="1"/>
</dbReference>
<dbReference type="FunFam" id="1.20.5.170:FF:000001">
    <property type="entry name" value="Tropomyosin alpha-1 chain isoform 1"/>
    <property type="match status" value="1"/>
</dbReference>
<dbReference type="FunFam" id="1.20.5.340:FF:000001">
    <property type="entry name" value="Tropomyosin alpha-1 chain isoform 2"/>
    <property type="match status" value="1"/>
</dbReference>
<dbReference type="Gene3D" id="1.20.5.170">
    <property type="match status" value="2"/>
</dbReference>
<dbReference type="Gene3D" id="1.20.5.340">
    <property type="match status" value="1"/>
</dbReference>
<dbReference type="InterPro" id="IPR000533">
    <property type="entry name" value="Tropomyosin"/>
</dbReference>
<dbReference type="PANTHER" id="PTHR19269">
    <property type="entry name" value="TROPOMYOSIN"/>
    <property type="match status" value="1"/>
</dbReference>
<dbReference type="Pfam" id="PF00261">
    <property type="entry name" value="Tropomyosin"/>
    <property type="match status" value="1"/>
</dbReference>
<dbReference type="PRINTS" id="PR00194">
    <property type="entry name" value="TROPOMYOSIN"/>
</dbReference>
<dbReference type="SUPFAM" id="SSF57997">
    <property type="entry name" value="Tropomyosin"/>
    <property type="match status" value="1"/>
</dbReference>
<dbReference type="PROSITE" id="PS00326">
    <property type="entry name" value="TROPOMYOSIN"/>
    <property type="match status" value="1"/>
</dbReference>